<feature type="chain" id="PRO_1000198212" description="Putative regulatory protein BCB4264_A3971">
    <location>
        <begin position="1"/>
        <end position="87"/>
    </location>
</feature>
<protein>
    <recommendedName>
        <fullName evidence="1">Putative regulatory protein BCB4264_A3971</fullName>
    </recommendedName>
</protein>
<name>Y3971_BACC4</name>
<reference key="1">
    <citation type="submission" date="2008-10" db="EMBL/GenBank/DDBJ databases">
        <title>Genome sequence of Bacillus cereus B4264.</title>
        <authorList>
            <person name="Dodson R.J."/>
            <person name="Durkin A.S."/>
            <person name="Rosovitz M.J."/>
            <person name="Rasko D.A."/>
            <person name="Hoffmaster A."/>
            <person name="Ravel J."/>
            <person name="Sutton G."/>
        </authorList>
    </citation>
    <scope>NUCLEOTIDE SEQUENCE [LARGE SCALE GENOMIC DNA]</scope>
    <source>
        <strain>B4264</strain>
    </source>
</reference>
<proteinExistence type="inferred from homology"/>
<organism>
    <name type="scientific">Bacillus cereus (strain B4264)</name>
    <dbReference type="NCBI Taxonomy" id="405532"/>
    <lineage>
        <taxon>Bacteria</taxon>
        <taxon>Bacillati</taxon>
        <taxon>Bacillota</taxon>
        <taxon>Bacilli</taxon>
        <taxon>Bacillales</taxon>
        <taxon>Bacillaceae</taxon>
        <taxon>Bacillus</taxon>
        <taxon>Bacillus cereus group</taxon>
    </lineage>
</organism>
<evidence type="ECO:0000255" key="1">
    <source>
        <dbReference type="HAMAP-Rule" id="MF_01503"/>
    </source>
</evidence>
<comment type="similarity">
    <text evidence="1">Belongs to the RemA family.</text>
</comment>
<sequence length="87" mass="9647">MAMRFLNIGYGNIVSAHRIIAIVSPESAPIKRTVQEAREHNALLDATYGRKTRAVIVMDDGHVVLSPIQPETIAHRLNNKEDLSEEG</sequence>
<accession>B7H6K9</accession>
<gene>
    <name type="ordered locus">BCB4264_A3971</name>
</gene>
<dbReference type="EMBL" id="CP001176">
    <property type="protein sequence ID" value="ACK61347.1"/>
    <property type="molecule type" value="Genomic_DNA"/>
</dbReference>
<dbReference type="SMR" id="B7H6K9"/>
<dbReference type="KEGG" id="bcb:BCB4264_A3971"/>
<dbReference type="HOGENOM" id="CLU_165326_0_0_9"/>
<dbReference type="Proteomes" id="UP000007096">
    <property type="component" value="Chromosome"/>
</dbReference>
<dbReference type="HAMAP" id="MF_01503">
    <property type="entry name" value="RemA"/>
    <property type="match status" value="1"/>
</dbReference>
<dbReference type="InterPro" id="IPR007169">
    <property type="entry name" value="RemA-like"/>
</dbReference>
<dbReference type="NCBIfam" id="NF046064">
    <property type="entry name" value="MtxBflmRegRemA"/>
    <property type="match status" value="1"/>
</dbReference>
<dbReference type="NCBIfam" id="NF003315">
    <property type="entry name" value="PRK04323.1"/>
    <property type="match status" value="1"/>
</dbReference>
<dbReference type="PANTHER" id="PTHR38449:SF1">
    <property type="entry name" value="REGULATORY PROTEIN SSL2874-RELATED"/>
    <property type="match status" value="1"/>
</dbReference>
<dbReference type="PANTHER" id="PTHR38449">
    <property type="entry name" value="REGULATORY PROTEIN TM_1690-RELATED"/>
    <property type="match status" value="1"/>
</dbReference>
<dbReference type="Pfam" id="PF04025">
    <property type="entry name" value="RemA-like"/>
    <property type="match status" value="1"/>
</dbReference>